<protein>
    <recommendedName>
        <fullName evidence="1">Methionine--tRNA ligase</fullName>
        <ecNumber evidence="1">6.1.1.10</ecNumber>
    </recommendedName>
    <alternativeName>
        <fullName evidence="1">Methionyl-tRNA synthetase</fullName>
        <shortName evidence="1">MetRS</shortName>
    </alternativeName>
</protein>
<evidence type="ECO:0000255" key="1">
    <source>
        <dbReference type="HAMAP-Rule" id="MF_00098"/>
    </source>
</evidence>
<evidence type="ECO:0000305" key="2"/>
<proteinExistence type="inferred from homology"/>
<accession>Q5ZRJ9</accession>
<reference key="1">
    <citation type="journal article" date="2004" name="Science">
        <title>The genomic sequence of the accidental pathogen Legionella pneumophila.</title>
        <authorList>
            <person name="Chien M."/>
            <person name="Morozova I."/>
            <person name="Shi S."/>
            <person name="Sheng H."/>
            <person name="Chen J."/>
            <person name="Gomez S.M."/>
            <person name="Asamani G."/>
            <person name="Hill K."/>
            <person name="Nuara J."/>
            <person name="Feder M."/>
            <person name="Rineer J."/>
            <person name="Greenberg J.J."/>
            <person name="Steshenko V."/>
            <person name="Park S.H."/>
            <person name="Zhao B."/>
            <person name="Teplitskaya E."/>
            <person name="Edwards J.R."/>
            <person name="Pampou S."/>
            <person name="Georghiou A."/>
            <person name="Chou I.-C."/>
            <person name="Iannuccilli W."/>
            <person name="Ulz M.E."/>
            <person name="Kim D.H."/>
            <person name="Geringer-Sameth A."/>
            <person name="Goldsberry C."/>
            <person name="Morozov P."/>
            <person name="Fischer S.G."/>
            <person name="Segal G."/>
            <person name="Qu X."/>
            <person name="Rzhetsky A."/>
            <person name="Zhang P."/>
            <person name="Cayanis E."/>
            <person name="De Jong P.J."/>
            <person name="Ju J."/>
            <person name="Kalachikov S."/>
            <person name="Shuman H.A."/>
            <person name="Russo J.J."/>
        </authorList>
    </citation>
    <scope>NUCLEOTIDE SEQUENCE [LARGE SCALE GENOMIC DNA]</scope>
    <source>
        <strain>Philadelphia 1 / ATCC 33152 / DSM 7513</strain>
    </source>
</reference>
<name>SYM_LEGPH</name>
<keyword id="KW-0030">Aminoacyl-tRNA synthetase</keyword>
<keyword id="KW-0067">ATP-binding</keyword>
<keyword id="KW-0963">Cytoplasm</keyword>
<keyword id="KW-0436">Ligase</keyword>
<keyword id="KW-0479">Metal-binding</keyword>
<keyword id="KW-0547">Nucleotide-binding</keyword>
<keyword id="KW-0648">Protein biosynthesis</keyword>
<keyword id="KW-1185">Reference proteome</keyword>
<keyword id="KW-0694">RNA-binding</keyword>
<keyword id="KW-0820">tRNA-binding</keyword>
<keyword id="KW-0862">Zinc</keyword>
<dbReference type="EC" id="6.1.1.10" evidence="1"/>
<dbReference type="EMBL" id="AE017354">
    <property type="protein sequence ID" value="AAU28929.1"/>
    <property type="status" value="ALT_INIT"/>
    <property type="molecule type" value="Genomic_DNA"/>
</dbReference>
<dbReference type="RefSeq" id="WP_010948568.1">
    <property type="nucleotide sequence ID" value="NC_002942.5"/>
</dbReference>
<dbReference type="RefSeq" id="YP_096876.2">
    <property type="nucleotide sequence ID" value="NC_002942.5"/>
</dbReference>
<dbReference type="SMR" id="Q5ZRJ9"/>
<dbReference type="STRING" id="272624.lpg2882"/>
<dbReference type="PaxDb" id="272624-lpg2882"/>
<dbReference type="GeneID" id="57036881"/>
<dbReference type="KEGG" id="lpn:lpg2882"/>
<dbReference type="PATRIC" id="fig|272624.6.peg.3070"/>
<dbReference type="eggNOG" id="COG0073">
    <property type="taxonomic scope" value="Bacteria"/>
</dbReference>
<dbReference type="eggNOG" id="COG0143">
    <property type="taxonomic scope" value="Bacteria"/>
</dbReference>
<dbReference type="HOGENOM" id="CLU_009710_7_0_6"/>
<dbReference type="OrthoDB" id="9810191at2"/>
<dbReference type="Proteomes" id="UP000000609">
    <property type="component" value="Chromosome"/>
</dbReference>
<dbReference type="GO" id="GO:0005829">
    <property type="term" value="C:cytosol"/>
    <property type="evidence" value="ECO:0007669"/>
    <property type="project" value="TreeGrafter"/>
</dbReference>
<dbReference type="GO" id="GO:0005524">
    <property type="term" value="F:ATP binding"/>
    <property type="evidence" value="ECO:0007669"/>
    <property type="project" value="UniProtKB-UniRule"/>
</dbReference>
<dbReference type="GO" id="GO:0046872">
    <property type="term" value="F:metal ion binding"/>
    <property type="evidence" value="ECO:0007669"/>
    <property type="project" value="UniProtKB-KW"/>
</dbReference>
<dbReference type="GO" id="GO:0004825">
    <property type="term" value="F:methionine-tRNA ligase activity"/>
    <property type="evidence" value="ECO:0007669"/>
    <property type="project" value="UniProtKB-UniRule"/>
</dbReference>
<dbReference type="GO" id="GO:0000049">
    <property type="term" value="F:tRNA binding"/>
    <property type="evidence" value="ECO:0007669"/>
    <property type="project" value="UniProtKB-KW"/>
</dbReference>
<dbReference type="GO" id="GO:0006431">
    <property type="term" value="P:methionyl-tRNA aminoacylation"/>
    <property type="evidence" value="ECO:0007669"/>
    <property type="project" value="UniProtKB-UniRule"/>
</dbReference>
<dbReference type="CDD" id="cd07957">
    <property type="entry name" value="Anticodon_Ia_Met"/>
    <property type="match status" value="1"/>
</dbReference>
<dbReference type="CDD" id="cd00814">
    <property type="entry name" value="MetRS_core"/>
    <property type="match status" value="1"/>
</dbReference>
<dbReference type="CDD" id="cd02800">
    <property type="entry name" value="tRNA_bind_EcMetRS_like"/>
    <property type="match status" value="1"/>
</dbReference>
<dbReference type="FunFam" id="1.10.730.10:FF:000005">
    <property type="entry name" value="Methionine--tRNA ligase"/>
    <property type="match status" value="1"/>
</dbReference>
<dbReference type="FunFam" id="2.20.28.20:FF:000001">
    <property type="entry name" value="Methionine--tRNA ligase"/>
    <property type="match status" value="1"/>
</dbReference>
<dbReference type="FunFam" id="2.40.50.140:FF:000042">
    <property type="entry name" value="Methionine--tRNA ligase"/>
    <property type="match status" value="1"/>
</dbReference>
<dbReference type="Gene3D" id="3.40.50.620">
    <property type="entry name" value="HUPs"/>
    <property type="match status" value="1"/>
</dbReference>
<dbReference type="Gene3D" id="1.10.730.10">
    <property type="entry name" value="Isoleucyl-tRNA Synthetase, Domain 1"/>
    <property type="match status" value="1"/>
</dbReference>
<dbReference type="Gene3D" id="2.20.28.20">
    <property type="entry name" value="Methionyl-tRNA synthetase, Zn-domain"/>
    <property type="match status" value="1"/>
</dbReference>
<dbReference type="Gene3D" id="2.40.50.140">
    <property type="entry name" value="Nucleic acid-binding proteins"/>
    <property type="match status" value="1"/>
</dbReference>
<dbReference type="HAMAP" id="MF_00098">
    <property type="entry name" value="Met_tRNA_synth_type1"/>
    <property type="match status" value="1"/>
</dbReference>
<dbReference type="InterPro" id="IPR001412">
    <property type="entry name" value="aa-tRNA-synth_I_CS"/>
</dbReference>
<dbReference type="InterPro" id="IPR041872">
    <property type="entry name" value="Anticodon_Met"/>
</dbReference>
<dbReference type="InterPro" id="IPR004495">
    <property type="entry name" value="Met-tRNA-synth_bsu_C"/>
</dbReference>
<dbReference type="InterPro" id="IPR023458">
    <property type="entry name" value="Met-tRNA_ligase_1"/>
</dbReference>
<dbReference type="InterPro" id="IPR014758">
    <property type="entry name" value="Met-tRNA_synth"/>
</dbReference>
<dbReference type="InterPro" id="IPR015413">
    <property type="entry name" value="Methionyl/Leucyl_tRNA_Synth"/>
</dbReference>
<dbReference type="InterPro" id="IPR033911">
    <property type="entry name" value="MetRS_core"/>
</dbReference>
<dbReference type="InterPro" id="IPR029038">
    <property type="entry name" value="MetRS_Zn"/>
</dbReference>
<dbReference type="InterPro" id="IPR012340">
    <property type="entry name" value="NA-bd_OB-fold"/>
</dbReference>
<dbReference type="InterPro" id="IPR014729">
    <property type="entry name" value="Rossmann-like_a/b/a_fold"/>
</dbReference>
<dbReference type="InterPro" id="IPR002547">
    <property type="entry name" value="tRNA-bd_dom"/>
</dbReference>
<dbReference type="InterPro" id="IPR009080">
    <property type="entry name" value="tRNAsynth_Ia_anticodon-bd"/>
</dbReference>
<dbReference type="NCBIfam" id="TIGR00398">
    <property type="entry name" value="metG"/>
    <property type="match status" value="1"/>
</dbReference>
<dbReference type="NCBIfam" id="TIGR00399">
    <property type="entry name" value="metG_C_term"/>
    <property type="match status" value="1"/>
</dbReference>
<dbReference type="NCBIfam" id="NF001100">
    <property type="entry name" value="PRK00133.1"/>
    <property type="match status" value="1"/>
</dbReference>
<dbReference type="PANTHER" id="PTHR45765">
    <property type="entry name" value="METHIONINE--TRNA LIGASE"/>
    <property type="match status" value="1"/>
</dbReference>
<dbReference type="PANTHER" id="PTHR45765:SF1">
    <property type="entry name" value="METHIONINE--TRNA LIGASE, CYTOPLASMIC"/>
    <property type="match status" value="1"/>
</dbReference>
<dbReference type="Pfam" id="PF19303">
    <property type="entry name" value="Anticodon_3"/>
    <property type="match status" value="1"/>
</dbReference>
<dbReference type="Pfam" id="PF09334">
    <property type="entry name" value="tRNA-synt_1g"/>
    <property type="match status" value="1"/>
</dbReference>
<dbReference type="Pfam" id="PF01588">
    <property type="entry name" value="tRNA_bind"/>
    <property type="match status" value="1"/>
</dbReference>
<dbReference type="PRINTS" id="PR01041">
    <property type="entry name" value="TRNASYNTHMET"/>
</dbReference>
<dbReference type="SUPFAM" id="SSF47323">
    <property type="entry name" value="Anticodon-binding domain of a subclass of class I aminoacyl-tRNA synthetases"/>
    <property type="match status" value="1"/>
</dbReference>
<dbReference type="SUPFAM" id="SSF57770">
    <property type="entry name" value="Methionyl-tRNA synthetase (MetRS), Zn-domain"/>
    <property type="match status" value="1"/>
</dbReference>
<dbReference type="SUPFAM" id="SSF50249">
    <property type="entry name" value="Nucleic acid-binding proteins"/>
    <property type="match status" value="1"/>
</dbReference>
<dbReference type="SUPFAM" id="SSF52374">
    <property type="entry name" value="Nucleotidylyl transferase"/>
    <property type="match status" value="1"/>
</dbReference>
<dbReference type="PROSITE" id="PS00178">
    <property type="entry name" value="AA_TRNA_LIGASE_I"/>
    <property type="match status" value="1"/>
</dbReference>
<dbReference type="PROSITE" id="PS50886">
    <property type="entry name" value="TRBD"/>
    <property type="match status" value="1"/>
</dbReference>
<feature type="chain" id="PRO_0000139138" description="Methionine--tRNA ligase">
    <location>
        <begin position="1"/>
        <end position="670"/>
    </location>
</feature>
<feature type="domain" description="tRNA-binding" evidence="1">
    <location>
        <begin position="570"/>
        <end position="670"/>
    </location>
</feature>
<feature type="short sequence motif" description="'HIGH' region">
    <location>
        <begin position="14"/>
        <end position="24"/>
    </location>
</feature>
<feature type="short sequence motif" description="'KMSKS' region">
    <location>
        <begin position="330"/>
        <end position="334"/>
    </location>
</feature>
<feature type="binding site" evidence="1">
    <location>
        <position position="145"/>
    </location>
    <ligand>
        <name>Zn(2+)</name>
        <dbReference type="ChEBI" id="CHEBI:29105"/>
    </ligand>
</feature>
<feature type="binding site" evidence="1">
    <location>
        <position position="148"/>
    </location>
    <ligand>
        <name>Zn(2+)</name>
        <dbReference type="ChEBI" id="CHEBI:29105"/>
    </ligand>
</feature>
<feature type="binding site" evidence="1">
    <location>
        <position position="158"/>
    </location>
    <ligand>
        <name>Zn(2+)</name>
        <dbReference type="ChEBI" id="CHEBI:29105"/>
    </ligand>
</feature>
<feature type="binding site" evidence="1">
    <location>
        <position position="161"/>
    </location>
    <ligand>
        <name>Zn(2+)</name>
        <dbReference type="ChEBI" id="CHEBI:29105"/>
    </ligand>
</feature>
<feature type="binding site" evidence="1">
    <location>
        <position position="333"/>
    </location>
    <ligand>
        <name>ATP</name>
        <dbReference type="ChEBI" id="CHEBI:30616"/>
    </ligand>
</feature>
<organism>
    <name type="scientific">Legionella pneumophila subsp. pneumophila (strain Philadelphia 1 / ATCC 33152 / DSM 7513)</name>
    <dbReference type="NCBI Taxonomy" id="272624"/>
    <lineage>
        <taxon>Bacteria</taxon>
        <taxon>Pseudomonadati</taxon>
        <taxon>Pseudomonadota</taxon>
        <taxon>Gammaproteobacteria</taxon>
        <taxon>Legionellales</taxon>
        <taxon>Legionellaceae</taxon>
        <taxon>Legionella</taxon>
    </lineage>
</organism>
<gene>
    <name evidence="1" type="primary">metG</name>
    <name type="ordered locus">lpg2882</name>
</gene>
<comment type="function">
    <text evidence="1">Is required not only for elongation of protein synthesis but also for the initiation of all mRNA translation through initiator tRNA(fMet) aminoacylation.</text>
</comment>
<comment type="catalytic activity">
    <reaction evidence="1">
        <text>tRNA(Met) + L-methionine + ATP = L-methionyl-tRNA(Met) + AMP + diphosphate</text>
        <dbReference type="Rhea" id="RHEA:13481"/>
        <dbReference type="Rhea" id="RHEA-COMP:9667"/>
        <dbReference type="Rhea" id="RHEA-COMP:9698"/>
        <dbReference type="ChEBI" id="CHEBI:30616"/>
        <dbReference type="ChEBI" id="CHEBI:33019"/>
        <dbReference type="ChEBI" id="CHEBI:57844"/>
        <dbReference type="ChEBI" id="CHEBI:78442"/>
        <dbReference type="ChEBI" id="CHEBI:78530"/>
        <dbReference type="ChEBI" id="CHEBI:456215"/>
        <dbReference type="EC" id="6.1.1.10"/>
    </reaction>
</comment>
<comment type="cofactor">
    <cofactor evidence="1">
        <name>Zn(2+)</name>
        <dbReference type="ChEBI" id="CHEBI:29105"/>
    </cofactor>
    <text evidence="1">Binds 1 zinc ion per subunit.</text>
</comment>
<comment type="subunit">
    <text evidence="1">Homodimer.</text>
</comment>
<comment type="subcellular location">
    <subcellularLocation>
        <location evidence="1">Cytoplasm</location>
    </subcellularLocation>
</comment>
<comment type="similarity">
    <text evidence="1">Belongs to the class-I aminoacyl-tRNA synthetase family. MetG type 1 subfamily.</text>
</comment>
<comment type="sequence caution" evidence="2">
    <conflict type="erroneous initiation">
        <sequence resource="EMBL-CDS" id="AAU28929"/>
    </conflict>
</comment>
<sequence>MTSERKMLVTSALPYANGHLHLGHLVEHIQTDIWVRTHKMLGIQCISVCGDDAHGTPIMLKAEQLGITPEALTAEIKLSHEKDFKAFAIDYDYYHTTHSPENQALATTIFERLQAGGDIVKKTIRQFYDPVKQMFLPDRYVKGTCPKCAAVDQYGDNCEVCGATYSPTDLINPVSVISGVSPVEKESEHYFFDLPRYEELLKDWTRKGHLQTEVTNKLSEWFEAGLKQWDISRDAPYFGFPIPGVPDKYFYVWLDAPIGYMASFKKYCDERGVSFDEFWDKASKTELYHFVGKDIVYFHALFWPAMLAASGFRTPTAVYTHGFLTVEGQKMSKSRGTFIEARAYLAHLHPEYLRYYFAAKLNGRVDDLDLNFDDFVNRVNADLVGKVVNIASRCAGFINKRFDNRLSSELNDQKLYNDLLSARESVIDAFVSRDYARAIRQIMDCADKVNQYIDANKPWVLAKDESKLNEVHAICTMGINLFRILITYLKPVLPMMAKASEEFLNSEPLHWDSIDKPLLNHRINTFKPLMVRVEKEKIEAMLVQSKESLMTTPVKENTPVEDANLISIEDFAKVDLRIAKIVNAEPVEGADKLMRLILDLGDAQKQVFAGIKKAYDAEELIGRLTVMVANLEPRTMRFGVSEGMVLAAGDGQGIYLLQPDAGALPGMKVK</sequence>